<feature type="chain" id="PRO_1000078298" description="Sec-independent protein translocase protein TatA">
    <location>
        <begin position="1"/>
        <end position="72"/>
    </location>
</feature>
<feature type="transmembrane region" description="Helical" evidence="1">
    <location>
        <begin position="1"/>
        <end position="21"/>
    </location>
</feature>
<feature type="region of interest" description="Disordered" evidence="2">
    <location>
        <begin position="43"/>
        <end position="72"/>
    </location>
</feature>
<feature type="compositionally biased region" description="Basic and acidic residues" evidence="2">
    <location>
        <begin position="50"/>
        <end position="72"/>
    </location>
</feature>
<keyword id="KW-0997">Cell inner membrane</keyword>
<keyword id="KW-1003">Cell membrane</keyword>
<keyword id="KW-0472">Membrane</keyword>
<keyword id="KW-0653">Protein transport</keyword>
<keyword id="KW-1185">Reference proteome</keyword>
<keyword id="KW-0811">Translocation</keyword>
<keyword id="KW-0812">Transmembrane</keyword>
<keyword id="KW-1133">Transmembrane helix</keyword>
<keyword id="KW-0813">Transport</keyword>
<gene>
    <name evidence="1" type="primary">tatA</name>
    <name type="ordered locus">BCAN_A0896</name>
</gene>
<organism>
    <name type="scientific">Brucella canis (strain ATCC 23365 / NCTC 10854 / RM-666)</name>
    <dbReference type="NCBI Taxonomy" id="483179"/>
    <lineage>
        <taxon>Bacteria</taxon>
        <taxon>Pseudomonadati</taxon>
        <taxon>Pseudomonadota</taxon>
        <taxon>Alphaproteobacteria</taxon>
        <taxon>Hyphomicrobiales</taxon>
        <taxon>Brucellaceae</taxon>
        <taxon>Brucella/Ochrobactrum group</taxon>
        <taxon>Brucella</taxon>
    </lineage>
</organism>
<evidence type="ECO:0000255" key="1">
    <source>
        <dbReference type="HAMAP-Rule" id="MF_00236"/>
    </source>
</evidence>
<evidence type="ECO:0000256" key="2">
    <source>
        <dbReference type="SAM" id="MobiDB-lite"/>
    </source>
</evidence>
<accession>A9MAQ5</accession>
<sequence length="72" mass="7999">MGSFSIWHWLIVLAVVLLLFGRGKIPELMGDVAKGIKNFKQGMADEDAKEDPRTIDAKAEEPVKDVKKTTKS</sequence>
<dbReference type="EMBL" id="CP000872">
    <property type="protein sequence ID" value="ABX61958.1"/>
    <property type="molecule type" value="Genomic_DNA"/>
</dbReference>
<dbReference type="RefSeq" id="WP_002964012.1">
    <property type="nucleotide sequence ID" value="NC_010103.1"/>
</dbReference>
<dbReference type="SMR" id="A9MAQ5"/>
<dbReference type="KEGG" id="bcs:BCAN_A0896"/>
<dbReference type="HOGENOM" id="CLU_086034_5_0_5"/>
<dbReference type="Proteomes" id="UP000001385">
    <property type="component" value="Chromosome I"/>
</dbReference>
<dbReference type="GO" id="GO:0033281">
    <property type="term" value="C:TAT protein transport complex"/>
    <property type="evidence" value="ECO:0007669"/>
    <property type="project" value="UniProtKB-UniRule"/>
</dbReference>
<dbReference type="GO" id="GO:0008320">
    <property type="term" value="F:protein transmembrane transporter activity"/>
    <property type="evidence" value="ECO:0007669"/>
    <property type="project" value="UniProtKB-UniRule"/>
</dbReference>
<dbReference type="GO" id="GO:0043953">
    <property type="term" value="P:protein transport by the Tat complex"/>
    <property type="evidence" value="ECO:0007669"/>
    <property type="project" value="UniProtKB-UniRule"/>
</dbReference>
<dbReference type="Gene3D" id="1.20.5.3310">
    <property type="match status" value="1"/>
</dbReference>
<dbReference type="HAMAP" id="MF_00236">
    <property type="entry name" value="TatA_E"/>
    <property type="match status" value="1"/>
</dbReference>
<dbReference type="InterPro" id="IPR003369">
    <property type="entry name" value="TatA/B/E"/>
</dbReference>
<dbReference type="InterPro" id="IPR006312">
    <property type="entry name" value="TatA/E"/>
</dbReference>
<dbReference type="NCBIfam" id="NF001940">
    <property type="entry name" value="PRK00720.1"/>
    <property type="match status" value="1"/>
</dbReference>
<dbReference type="NCBIfam" id="TIGR01411">
    <property type="entry name" value="tatAE"/>
    <property type="match status" value="1"/>
</dbReference>
<dbReference type="PANTHER" id="PTHR42982">
    <property type="entry name" value="SEC-INDEPENDENT PROTEIN TRANSLOCASE PROTEIN TATA"/>
    <property type="match status" value="1"/>
</dbReference>
<dbReference type="PANTHER" id="PTHR42982:SF1">
    <property type="entry name" value="SEC-INDEPENDENT PROTEIN TRANSLOCASE PROTEIN TATA"/>
    <property type="match status" value="1"/>
</dbReference>
<dbReference type="Pfam" id="PF02416">
    <property type="entry name" value="TatA_B_E"/>
    <property type="match status" value="1"/>
</dbReference>
<name>TATA_BRUC2</name>
<comment type="function">
    <text evidence="1">Part of the twin-arginine translocation (Tat) system that transports large folded proteins containing a characteristic twin-arginine motif in their signal peptide across membranes. TatA could form the protein-conducting channel of the Tat system.</text>
</comment>
<comment type="subunit">
    <text evidence="1">The Tat system comprises two distinct complexes: a TatABC complex, containing multiple copies of TatA, TatB and TatC subunits, and a separate TatA complex, containing only TatA subunits. Substrates initially bind to the TatABC complex, which probably triggers association of the separate TatA complex to form the active translocon.</text>
</comment>
<comment type="subcellular location">
    <subcellularLocation>
        <location evidence="1">Cell inner membrane</location>
        <topology evidence="1">Single-pass membrane protein</topology>
    </subcellularLocation>
</comment>
<comment type="similarity">
    <text evidence="1">Belongs to the TatA/E family.</text>
</comment>
<proteinExistence type="inferred from homology"/>
<reference key="1">
    <citation type="submission" date="2007-10" db="EMBL/GenBank/DDBJ databases">
        <title>Brucella canis ATCC 23365 whole genome shotgun sequencing project.</title>
        <authorList>
            <person name="Setubal J.C."/>
            <person name="Bowns C."/>
            <person name="Boyle S."/>
            <person name="Crasta O.R."/>
            <person name="Czar M.J."/>
            <person name="Dharmanolla C."/>
            <person name="Gillespie J.J."/>
            <person name="Kenyon R.W."/>
            <person name="Lu J."/>
            <person name="Mane S."/>
            <person name="Mohapatra S."/>
            <person name="Nagrani S."/>
            <person name="Purkayastha A."/>
            <person name="Rajasimha H.K."/>
            <person name="Shallom J.M."/>
            <person name="Shallom S."/>
            <person name="Shukla M."/>
            <person name="Snyder E.E."/>
            <person name="Sobral B.W."/>
            <person name="Wattam A.R."/>
            <person name="Will R."/>
            <person name="Williams K."/>
            <person name="Yoo H."/>
            <person name="Bruce D."/>
            <person name="Detter C."/>
            <person name="Munk C."/>
            <person name="Brettin T.S."/>
        </authorList>
    </citation>
    <scope>NUCLEOTIDE SEQUENCE [LARGE SCALE GENOMIC DNA]</scope>
    <source>
        <strain>ATCC 23365 / NCTC 10854 / RM-666</strain>
    </source>
</reference>
<protein>
    <recommendedName>
        <fullName evidence="1">Sec-independent protein translocase protein TatA</fullName>
    </recommendedName>
</protein>